<name>T244_PHONI</name>
<sequence>VFCRFNGQQCTSDGQCCYGKCRTAFLRMICMGG</sequence>
<reference evidence="3" key="1">
    <citation type="journal article" date="2006" name="Comp. Biochem. Physiol.">
        <title>Comparison of the partial proteomes of the venoms of Brazilian spiders of the genus Phoneutria.</title>
        <authorList>
            <person name="Richardson M."/>
            <person name="Pimenta A.M."/>
            <person name="Bemquerer M.P."/>
            <person name="Santoro M.M."/>
            <person name="Beirao P.S."/>
            <person name="Lima M.E."/>
            <person name="Figueiredo S.G."/>
            <person name="Bloch C. Jr."/>
            <person name="Vasconcelos E.A."/>
            <person name="Campos F.A."/>
            <person name="Gomes P.C."/>
            <person name="Cordeiro M.N."/>
        </authorList>
    </citation>
    <scope>PROTEIN SEQUENCE</scope>
    <scope>SUBCELLULAR LOCATION</scope>
    <scope>TISSUE SPECIFICITY</scope>
    <scope>MASS SPECTROMETRY</scope>
    <source>
        <tissue evidence="2">Venom</tissue>
    </source>
</reference>
<evidence type="ECO:0000250" key="1"/>
<evidence type="ECO:0000269" key="2">
    <source>
    </source>
</evidence>
<evidence type="ECO:0000305" key="3"/>
<accession>P84018</accession>
<protein>
    <recommendedName>
        <fullName>U13-ctenitoxin-Pn1c</fullName>
        <shortName>U13-CNTX-Pn1c</shortName>
    </recommendedName>
    <alternativeName>
        <fullName>Neurotoxin PNTx24A0C4</fullName>
    </alternativeName>
</protein>
<organism>
    <name type="scientific">Phoneutria nigriventer</name>
    <name type="common">Brazilian armed spider</name>
    <name type="synonym">Ctenus nigriventer</name>
    <dbReference type="NCBI Taxonomy" id="6918"/>
    <lineage>
        <taxon>Eukaryota</taxon>
        <taxon>Metazoa</taxon>
        <taxon>Ecdysozoa</taxon>
        <taxon>Arthropoda</taxon>
        <taxon>Chelicerata</taxon>
        <taxon>Arachnida</taxon>
        <taxon>Araneae</taxon>
        <taxon>Araneomorphae</taxon>
        <taxon>Entelegynae</taxon>
        <taxon>Lycosoidea</taxon>
        <taxon>Ctenidae</taxon>
        <taxon>Phoneutria</taxon>
    </lineage>
</organism>
<keyword id="KW-0903">Direct protein sequencing</keyword>
<keyword id="KW-1015">Disulfide bond</keyword>
<keyword id="KW-0960">Knottin</keyword>
<keyword id="KW-0528">Neurotoxin</keyword>
<keyword id="KW-0964">Secreted</keyword>
<keyword id="KW-0800">Toxin</keyword>
<proteinExistence type="evidence at protein level"/>
<dbReference type="ArachnoServer" id="AS000162">
    <property type="toxin name" value="U13-ctenitoxin-Pn1c"/>
</dbReference>
<dbReference type="GO" id="GO:0005576">
    <property type="term" value="C:extracellular region"/>
    <property type="evidence" value="ECO:0007669"/>
    <property type="project" value="UniProtKB-SubCell"/>
</dbReference>
<dbReference type="GO" id="GO:0090729">
    <property type="term" value="F:toxin activity"/>
    <property type="evidence" value="ECO:0007669"/>
    <property type="project" value="UniProtKB-KW"/>
</dbReference>
<dbReference type="InterPro" id="IPR012634">
    <property type="entry name" value="Toxin_29"/>
</dbReference>
<dbReference type="Pfam" id="PF08116">
    <property type="entry name" value="Toxin_29"/>
    <property type="match status" value="1"/>
</dbReference>
<comment type="function">
    <text evidence="3">Acts as a neurotoxin.</text>
</comment>
<comment type="subcellular location">
    <subcellularLocation>
        <location evidence="2">Secreted</location>
    </subcellularLocation>
</comment>
<comment type="tissue specificity">
    <text evidence="2">Expressed by the venom gland.</text>
</comment>
<comment type="domain">
    <text evidence="1">The presence of a 'disulfide through disulfide knot' structurally defines this protein as a knottin.</text>
</comment>
<comment type="mass spectrometry"/>
<comment type="similarity">
    <text evidence="3">Belongs to the neurotoxin 17 (21C2) family.</text>
</comment>
<feature type="peptide" id="PRO_0000044972" description="U13-ctenitoxin-Pn1c">
    <location>
        <begin position="1"/>
        <end position="33"/>
    </location>
</feature>
<feature type="disulfide bond" evidence="1">
    <location>
        <begin position="3"/>
        <end position="17"/>
    </location>
</feature>
<feature type="disulfide bond" evidence="1">
    <location>
        <begin position="10"/>
        <end position="21"/>
    </location>
</feature>
<feature type="disulfide bond" evidence="1">
    <location>
        <begin position="16"/>
        <end position="30"/>
    </location>
</feature>